<protein>
    <recommendedName>
        <fullName>Elongation factor G</fullName>
        <shortName>EF-G</shortName>
    </recommendedName>
</protein>
<proteinExistence type="inferred from homology"/>
<organism>
    <name type="scientific">Mycobacterium tuberculosis (strain CDC 1551 / Oshkosh)</name>
    <dbReference type="NCBI Taxonomy" id="83331"/>
    <lineage>
        <taxon>Bacteria</taxon>
        <taxon>Bacillati</taxon>
        <taxon>Actinomycetota</taxon>
        <taxon>Actinomycetes</taxon>
        <taxon>Mycobacteriales</taxon>
        <taxon>Mycobacteriaceae</taxon>
        <taxon>Mycobacterium</taxon>
        <taxon>Mycobacterium tuberculosis complex</taxon>
    </lineage>
</organism>
<evidence type="ECO:0000250" key="1"/>
<evidence type="ECO:0000305" key="2"/>
<gene>
    <name type="primary">fusA</name>
    <name type="ordered locus">MT0712</name>
</gene>
<comment type="function">
    <text evidence="1">Catalyzes the GTP-dependent ribosomal translocation step during translation elongation. During this step, the ribosome changes from the pre-translocational (PRE) to the post-translocational (POST) state as the newly formed A-site-bound peptidyl-tRNA and P-site-bound deacylated tRNA move to the P and E sites, respectively. Catalyzes the coordinated movement of the two tRNA molecules, the mRNA and conformational changes in the ribosome (By similarity).</text>
</comment>
<comment type="subcellular location">
    <subcellularLocation>
        <location evidence="1">Cytoplasm</location>
    </subcellularLocation>
</comment>
<comment type="similarity">
    <text evidence="2">Belongs to the TRAFAC class translation factor GTPase superfamily. Classic translation factor GTPase family. EF-G/EF-2 subfamily.</text>
</comment>
<keyword id="KW-0963">Cytoplasm</keyword>
<keyword id="KW-0251">Elongation factor</keyword>
<keyword id="KW-0342">GTP-binding</keyword>
<keyword id="KW-0547">Nucleotide-binding</keyword>
<keyword id="KW-0648">Protein biosynthesis</keyword>
<keyword id="KW-1185">Reference proteome</keyword>
<feature type="chain" id="PRO_0000427100" description="Elongation factor G">
    <location>
        <begin position="1"/>
        <end position="701"/>
    </location>
</feature>
<feature type="domain" description="tr-type G">
    <location>
        <begin position="11"/>
        <end position="287"/>
    </location>
</feature>
<feature type="binding site" evidence="1">
    <location>
        <begin position="20"/>
        <end position="27"/>
    </location>
    <ligand>
        <name>GTP</name>
        <dbReference type="ChEBI" id="CHEBI:37565"/>
    </ligand>
</feature>
<feature type="binding site" evidence="1">
    <location>
        <begin position="84"/>
        <end position="88"/>
    </location>
    <ligand>
        <name>GTP</name>
        <dbReference type="ChEBI" id="CHEBI:37565"/>
    </ligand>
</feature>
<feature type="binding site" evidence="1">
    <location>
        <begin position="138"/>
        <end position="141"/>
    </location>
    <ligand>
        <name>GTP</name>
        <dbReference type="ChEBI" id="CHEBI:37565"/>
    </ligand>
</feature>
<name>EFG_MYCTO</name>
<reference key="1">
    <citation type="journal article" date="2002" name="J. Bacteriol.">
        <title>Whole-genome comparison of Mycobacterium tuberculosis clinical and laboratory strains.</title>
        <authorList>
            <person name="Fleischmann R.D."/>
            <person name="Alland D."/>
            <person name="Eisen J.A."/>
            <person name="Carpenter L."/>
            <person name="White O."/>
            <person name="Peterson J.D."/>
            <person name="DeBoy R.T."/>
            <person name="Dodson R.J."/>
            <person name="Gwinn M.L."/>
            <person name="Haft D.H."/>
            <person name="Hickey E.K."/>
            <person name="Kolonay J.F."/>
            <person name="Nelson W.C."/>
            <person name="Umayam L.A."/>
            <person name="Ermolaeva M.D."/>
            <person name="Salzberg S.L."/>
            <person name="Delcher A."/>
            <person name="Utterback T.R."/>
            <person name="Weidman J.F."/>
            <person name="Khouri H.M."/>
            <person name="Gill J."/>
            <person name="Mikula A."/>
            <person name="Bishai W."/>
            <person name="Jacobs W.R. Jr."/>
            <person name="Venter J.C."/>
            <person name="Fraser C.M."/>
        </authorList>
    </citation>
    <scope>NUCLEOTIDE SEQUENCE [LARGE SCALE GENOMIC DNA]</scope>
    <source>
        <strain>CDC 1551 / Oshkosh</strain>
    </source>
</reference>
<dbReference type="EMBL" id="AE000516">
    <property type="protein sequence ID" value="AAK44938.1"/>
    <property type="molecule type" value="Genomic_DNA"/>
</dbReference>
<dbReference type="PIR" id="E70827">
    <property type="entry name" value="E70827"/>
</dbReference>
<dbReference type="RefSeq" id="WP_003898554.1">
    <property type="nucleotide sequence ID" value="NZ_KK341227.1"/>
</dbReference>
<dbReference type="SMR" id="P9WNM6"/>
<dbReference type="GeneID" id="45424646"/>
<dbReference type="KEGG" id="mtc:MT0712"/>
<dbReference type="PATRIC" id="fig|83331.31.peg.760"/>
<dbReference type="HOGENOM" id="CLU_002794_4_1_11"/>
<dbReference type="Proteomes" id="UP000001020">
    <property type="component" value="Chromosome"/>
</dbReference>
<dbReference type="GO" id="GO:0005737">
    <property type="term" value="C:cytoplasm"/>
    <property type="evidence" value="ECO:0007669"/>
    <property type="project" value="UniProtKB-SubCell"/>
</dbReference>
<dbReference type="GO" id="GO:0005525">
    <property type="term" value="F:GTP binding"/>
    <property type="evidence" value="ECO:0007669"/>
    <property type="project" value="UniProtKB-UniRule"/>
</dbReference>
<dbReference type="GO" id="GO:0003924">
    <property type="term" value="F:GTPase activity"/>
    <property type="evidence" value="ECO:0007669"/>
    <property type="project" value="InterPro"/>
</dbReference>
<dbReference type="GO" id="GO:0003746">
    <property type="term" value="F:translation elongation factor activity"/>
    <property type="evidence" value="ECO:0007669"/>
    <property type="project" value="UniProtKB-UniRule"/>
</dbReference>
<dbReference type="GO" id="GO:0032790">
    <property type="term" value="P:ribosome disassembly"/>
    <property type="evidence" value="ECO:0007669"/>
    <property type="project" value="TreeGrafter"/>
</dbReference>
<dbReference type="CDD" id="cd01886">
    <property type="entry name" value="EF-G"/>
    <property type="match status" value="1"/>
</dbReference>
<dbReference type="CDD" id="cd16262">
    <property type="entry name" value="EFG_III"/>
    <property type="match status" value="1"/>
</dbReference>
<dbReference type="CDD" id="cd01434">
    <property type="entry name" value="EFG_mtEFG1_IV"/>
    <property type="match status" value="1"/>
</dbReference>
<dbReference type="CDD" id="cd03713">
    <property type="entry name" value="EFG_mtEFG_C"/>
    <property type="match status" value="1"/>
</dbReference>
<dbReference type="CDD" id="cd04088">
    <property type="entry name" value="EFG_mtEFG_II"/>
    <property type="match status" value="1"/>
</dbReference>
<dbReference type="FunFam" id="2.40.30.10:FF:000006">
    <property type="entry name" value="Elongation factor G"/>
    <property type="match status" value="1"/>
</dbReference>
<dbReference type="FunFam" id="3.30.230.10:FF:000003">
    <property type="entry name" value="Elongation factor G"/>
    <property type="match status" value="1"/>
</dbReference>
<dbReference type="FunFam" id="3.30.70.240:FF:000001">
    <property type="entry name" value="Elongation factor G"/>
    <property type="match status" value="1"/>
</dbReference>
<dbReference type="FunFam" id="3.30.70.870:FF:000001">
    <property type="entry name" value="Elongation factor G"/>
    <property type="match status" value="1"/>
</dbReference>
<dbReference type="FunFam" id="3.40.50.300:FF:000029">
    <property type="entry name" value="Elongation factor G"/>
    <property type="match status" value="1"/>
</dbReference>
<dbReference type="Gene3D" id="3.30.230.10">
    <property type="match status" value="1"/>
</dbReference>
<dbReference type="Gene3D" id="3.30.70.240">
    <property type="match status" value="1"/>
</dbReference>
<dbReference type="Gene3D" id="3.30.70.870">
    <property type="entry name" value="Elongation Factor G (Translational Gtpase), domain 3"/>
    <property type="match status" value="1"/>
</dbReference>
<dbReference type="Gene3D" id="3.40.50.300">
    <property type="entry name" value="P-loop containing nucleotide triphosphate hydrolases"/>
    <property type="match status" value="1"/>
</dbReference>
<dbReference type="Gene3D" id="2.40.30.10">
    <property type="entry name" value="Translation factors"/>
    <property type="match status" value="1"/>
</dbReference>
<dbReference type="HAMAP" id="MF_00054_B">
    <property type="entry name" value="EF_G_EF_2_B"/>
    <property type="match status" value="1"/>
</dbReference>
<dbReference type="InterPro" id="IPR041095">
    <property type="entry name" value="EFG_II"/>
</dbReference>
<dbReference type="InterPro" id="IPR009022">
    <property type="entry name" value="EFG_III"/>
</dbReference>
<dbReference type="InterPro" id="IPR035647">
    <property type="entry name" value="EFG_III/V"/>
</dbReference>
<dbReference type="InterPro" id="IPR047872">
    <property type="entry name" value="EFG_IV"/>
</dbReference>
<dbReference type="InterPro" id="IPR035649">
    <property type="entry name" value="EFG_V"/>
</dbReference>
<dbReference type="InterPro" id="IPR000640">
    <property type="entry name" value="EFG_V-like"/>
</dbReference>
<dbReference type="InterPro" id="IPR004161">
    <property type="entry name" value="EFTu-like_2"/>
</dbReference>
<dbReference type="InterPro" id="IPR031157">
    <property type="entry name" value="G_TR_CS"/>
</dbReference>
<dbReference type="InterPro" id="IPR027417">
    <property type="entry name" value="P-loop_NTPase"/>
</dbReference>
<dbReference type="InterPro" id="IPR020568">
    <property type="entry name" value="Ribosomal_Su5_D2-typ_SF"/>
</dbReference>
<dbReference type="InterPro" id="IPR014721">
    <property type="entry name" value="Ribsml_uS5_D2-typ_fold_subgr"/>
</dbReference>
<dbReference type="InterPro" id="IPR005225">
    <property type="entry name" value="Small_GTP-bd"/>
</dbReference>
<dbReference type="InterPro" id="IPR000795">
    <property type="entry name" value="T_Tr_GTP-bd_dom"/>
</dbReference>
<dbReference type="InterPro" id="IPR009000">
    <property type="entry name" value="Transl_B-barrel_sf"/>
</dbReference>
<dbReference type="InterPro" id="IPR004540">
    <property type="entry name" value="Transl_elong_EFG/EF2"/>
</dbReference>
<dbReference type="InterPro" id="IPR005517">
    <property type="entry name" value="Transl_elong_EFG/EF2_IV"/>
</dbReference>
<dbReference type="NCBIfam" id="TIGR00484">
    <property type="entry name" value="EF-G"/>
    <property type="match status" value="1"/>
</dbReference>
<dbReference type="NCBIfam" id="NF009381">
    <property type="entry name" value="PRK12740.1-5"/>
    <property type="match status" value="1"/>
</dbReference>
<dbReference type="NCBIfam" id="TIGR00231">
    <property type="entry name" value="small_GTP"/>
    <property type="match status" value="1"/>
</dbReference>
<dbReference type="PANTHER" id="PTHR43261:SF1">
    <property type="entry name" value="RIBOSOME-RELEASING FACTOR 2, MITOCHONDRIAL"/>
    <property type="match status" value="1"/>
</dbReference>
<dbReference type="PANTHER" id="PTHR43261">
    <property type="entry name" value="TRANSLATION ELONGATION FACTOR G-RELATED"/>
    <property type="match status" value="1"/>
</dbReference>
<dbReference type="Pfam" id="PF00679">
    <property type="entry name" value="EFG_C"/>
    <property type="match status" value="1"/>
</dbReference>
<dbReference type="Pfam" id="PF14492">
    <property type="entry name" value="EFG_III"/>
    <property type="match status" value="1"/>
</dbReference>
<dbReference type="Pfam" id="PF03764">
    <property type="entry name" value="EFG_IV"/>
    <property type="match status" value="1"/>
</dbReference>
<dbReference type="Pfam" id="PF00009">
    <property type="entry name" value="GTP_EFTU"/>
    <property type="match status" value="1"/>
</dbReference>
<dbReference type="Pfam" id="PF03144">
    <property type="entry name" value="GTP_EFTU_D2"/>
    <property type="match status" value="1"/>
</dbReference>
<dbReference type="PRINTS" id="PR00315">
    <property type="entry name" value="ELONGATNFCT"/>
</dbReference>
<dbReference type="SMART" id="SM00838">
    <property type="entry name" value="EFG_C"/>
    <property type="match status" value="1"/>
</dbReference>
<dbReference type="SMART" id="SM00889">
    <property type="entry name" value="EFG_IV"/>
    <property type="match status" value="1"/>
</dbReference>
<dbReference type="SUPFAM" id="SSF54980">
    <property type="entry name" value="EF-G C-terminal domain-like"/>
    <property type="match status" value="2"/>
</dbReference>
<dbReference type="SUPFAM" id="SSF52540">
    <property type="entry name" value="P-loop containing nucleoside triphosphate hydrolases"/>
    <property type="match status" value="1"/>
</dbReference>
<dbReference type="SUPFAM" id="SSF54211">
    <property type="entry name" value="Ribosomal protein S5 domain 2-like"/>
    <property type="match status" value="1"/>
</dbReference>
<dbReference type="SUPFAM" id="SSF50447">
    <property type="entry name" value="Translation proteins"/>
    <property type="match status" value="1"/>
</dbReference>
<dbReference type="PROSITE" id="PS00301">
    <property type="entry name" value="G_TR_1"/>
    <property type="match status" value="1"/>
</dbReference>
<dbReference type="PROSITE" id="PS51722">
    <property type="entry name" value="G_TR_2"/>
    <property type="match status" value="1"/>
</dbReference>
<sequence>MAQKDVLTDLSRVRNFGIMAHIDAGKTTTTERILYYTGINYKIGEVHDGAATMDWMEQEQERGITITSAATTTFWKDNQLNIIDTPGHVDFTVEVERNLRVLDGAVAVFDGKEGVEPQSEQVWRQADKYDVPRICFVNKMDKIGADFYFSVRTMGERLGANAVPIQLPVGAEADFEGVVDLVEMNAKVWRGETKLGETYDTVEIPADLAEQAEEYRTKLLEVVAESDEHLLEKYLGGEELTVDEIKGAIRKLTIASEIYPVLCGSAFKNKGVQPMLDAVVDYLPSPLDVPPAIGHAPAKEDEEVVRKATTDEPFAALAFKIATHPFFGKLTYIRVYSGTVESGSQVINATKGKKERLGKLFQMHSNKENPVDRASAGHIYAVIGLKDTTTGDTLSDPNQQIVLESMTFPDPVIEVAIEPKTKSDQEKLSLSIQKLAEEDPTFKVHLDSETGQTVIGGMGELHLDILVDRMRREFKVEANVGKPQVAYKETIKRLVQNVEYTHKKQTGGSGQFAKVIINLEPFTGEEGATYEFESKVTGGRIPREYIPSVDAGAQDAMQYGVLAGYPLVNLKVTLLDGAYHEVDSSEMAFKIAGSQVLKKAAALAQPVILEPIMAVEVTTPEDYMGDVIGDLNSRRGQIQAMEERAGARVVRAHVPLSEMFGYVGDLRSKTQGRANYSMVFDSYSEVPANVSKEIIAKATGE</sequence>
<accession>P9WNM6</accession>
<accession>L0T7E8</accession>
<accession>O53790</accession>
<accession>P0A556</accession>